<protein>
    <recommendedName>
        <fullName evidence="1">Flap endonuclease Xni</fullName>
        <shortName evidence="1">FEN</shortName>
        <ecNumber evidence="1">3.1.-.-</ecNumber>
    </recommendedName>
</protein>
<comment type="function">
    <text evidence="1">Has flap endonuclease activity. During DNA replication, flap endonucleases cleave the 5'-overhanging flap structure that is generated by displacement synthesis when DNA polymerase encounters the 5'-end of a downstream Okazaki fragment.</text>
</comment>
<comment type="cofactor">
    <cofactor evidence="1">
        <name>Mg(2+)</name>
        <dbReference type="ChEBI" id="CHEBI:18420"/>
    </cofactor>
    <text evidence="1">Binds 2 Mg(2+) per subunit. Only one magnesium ion has a direct interaction with the protein, the other interactions are indirect.</text>
</comment>
<comment type="cofactor">
    <cofactor evidence="1">
        <name>K(+)</name>
        <dbReference type="ChEBI" id="CHEBI:29103"/>
    </cofactor>
    <text evidence="1">Binds 1 K(+) per subunit. The potassium ion strongly increases the affinity for DNA.</text>
</comment>
<comment type="similarity">
    <text evidence="1">Belongs to the Xni family.</text>
</comment>
<comment type="sequence caution" evidence="2">
    <conflict type="erroneous initiation">
        <sequence resource="EMBL-CDS" id="AAX66817"/>
    </conflict>
    <text>Extended N-terminus.</text>
</comment>
<proteinExistence type="inferred from homology"/>
<reference key="1">
    <citation type="journal article" date="2005" name="Nucleic Acids Res.">
        <title>The genome sequence of Salmonella enterica serovar Choleraesuis, a highly invasive and resistant zoonotic pathogen.</title>
        <authorList>
            <person name="Chiu C.-H."/>
            <person name="Tang P."/>
            <person name="Chu C."/>
            <person name="Hu S."/>
            <person name="Bao Q."/>
            <person name="Yu J."/>
            <person name="Chou Y.-Y."/>
            <person name="Wang H.-S."/>
            <person name="Lee Y.-S."/>
        </authorList>
    </citation>
    <scope>NUCLEOTIDE SEQUENCE [LARGE SCALE GENOMIC DNA]</scope>
    <source>
        <strain>SC-B67</strain>
    </source>
</reference>
<accession>Q57KE5</accession>
<sequence length="251" mass="28149">MAAHLLIVDALNLIRRIHAVQGSPCVETCQHALDQLIIHSQPTHAVAVFDDDARSSGWRHQRLPDYKAGRPPMPDDLHNEMPALRAAFEQRGVRCWASDGNEADDLAATLALKVTEAGHQATIVSTDKGYCQLLSPGLRIRDYFQKRWLDAPFIEKEFGVLPRQLPDYWGLAGISSSKVPGVAGIGPKSATQLLIQFQNLEGIYAHLDKVPEKWRKKLETHKEMAFLCRDIARLQTDLHIDGNLQQLRLAR</sequence>
<feature type="chain" id="PRO_0000297869" description="Flap endonuclease Xni">
    <location>
        <begin position="1"/>
        <end position="251"/>
    </location>
</feature>
<feature type="domain" description="5'-3' exonuclease" evidence="1">
    <location>
        <begin position="160"/>
        <end position="249"/>
    </location>
</feature>
<feature type="region of interest" description="Interaction with DNA" evidence="1">
    <location>
        <begin position="184"/>
        <end position="189"/>
    </location>
</feature>
<feature type="binding site" evidence="1">
    <location>
        <position position="104"/>
    </location>
    <ligand>
        <name>Mg(2+)</name>
        <dbReference type="ChEBI" id="CHEBI:18420"/>
    </ligand>
</feature>
<feature type="binding site" evidence="1">
    <location>
        <position position="171"/>
    </location>
    <ligand>
        <name>K(+)</name>
        <dbReference type="ChEBI" id="CHEBI:29103"/>
    </ligand>
</feature>
<feature type="binding site" evidence="1">
    <location>
        <position position="172"/>
    </location>
    <ligand>
        <name>K(+)</name>
        <dbReference type="ChEBI" id="CHEBI:29103"/>
    </ligand>
</feature>
<feature type="binding site" evidence="1">
    <location>
        <position position="180"/>
    </location>
    <ligand>
        <name>K(+)</name>
        <dbReference type="ChEBI" id="CHEBI:29103"/>
    </ligand>
</feature>
<feature type="binding site" evidence="1">
    <location>
        <position position="182"/>
    </location>
    <ligand>
        <name>K(+)</name>
        <dbReference type="ChEBI" id="CHEBI:29103"/>
    </ligand>
</feature>
<feature type="binding site" evidence="1">
    <location>
        <position position="185"/>
    </location>
    <ligand>
        <name>K(+)</name>
        <dbReference type="ChEBI" id="CHEBI:29103"/>
    </ligand>
</feature>
<organism>
    <name type="scientific">Salmonella choleraesuis (strain SC-B67)</name>
    <dbReference type="NCBI Taxonomy" id="321314"/>
    <lineage>
        <taxon>Bacteria</taxon>
        <taxon>Pseudomonadati</taxon>
        <taxon>Pseudomonadota</taxon>
        <taxon>Gammaproteobacteria</taxon>
        <taxon>Enterobacterales</taxon>
        <taxon>Enterobacteriaceae</taxon>
        <taxon>Salmonella</taxon>
    </lineage>
</organism>
<gene>
    <name evidence="1" type="primary">xni</name>
    <name evidence="1" type="synonym">ygdG</name>
    <name type="ordered locus">SCH_2911</name>
</gene>
<evidence type="ECO:0000255" key="1">
    <source>
        <dbReference type="HAMAP-Rule" id="MF_01192"/>
    </source>
</evidence>
<evidence type="ECO:0000305" key="2"/>
<keyword id="KW-0238">DNA-binding</keyword>
<keyword id="KW-0255">Endonuclease</keyword>
<keyword id="KW-0378">Hydrolase</keyword>
<keyword id="KW-0460">Magnesium</keyword>
<keyword id="KW-0479">Metal-binding</keyword>
<keyword id="KW-0540">Nuclease</keyword>
<keyword id="KW-0630">Potassium</keyword>
<name>XNI_SALCH</name>
<dbReference type="EC" id="3.1.-.-" evidence="1"/>
<dbReference type="EMBL" id="AE017220">
    <property type="protein sequence ID" value="AAX66817.1"/>
    <property type="status" value="ALT_INIT"/>
    <property type="molecule type" value="Genomic_DNA"/>
</dbReference>
<dbReference type="SMR" id="Q57KE5"/>
<dbReference type="KEGG" id="sec:SCH_2911"/>
<dbReference type="HOGENOM" id="CLU_004675_1_2_6"/>
<dbReference type="Proteomes" id="UP000000538">
    <property type="component" value="Chromosome"/>
</dbReference>
<dbReference type="GO" id="GO:0008409">
    <property type="term" value="F:5'-3' exonuclease activity"/>
    <property type="evidence" value="ECO:0007669"/>
    <property type="project" value="InterPro"/>
</dbReference>
<dbReference type="GO" id="GO:0017108">
    <property type="term" value="F:5'-flap endonuclease activity"/>
    <property type="evidence" value="ECO:0007669"/>
    <property type="project" value="UniProtKB-UniRule"/>
</dbReference>
<dbReference type="GO" id="GO:0003677">
    <property type="term" value="F:DNA binding"/>
    <property type="evidence" value="ECO:0007669"/>
    <property type="project" value="UniProtKB-UniRule"/>
</dbReference>
<dbReference type="GO" id="GO:0000287">
    <property type="term" value="F:magnesium ion binding"/>
    <property type="evidence" value="ECO:0007669"/>
    <property type="project" value="UniProtKB-UniRule"/>
</dbReference>
<dbReference type="GO" id="GO:0030955">
    <property type="term" value="F:potassium ion binding"/>
    <property type="evidence" value="ECO:0007669"/>
    <property type="project" value="UniProtKB-UniRule"/>
</dbReference>
<dbReference type="GO" id="GO:0033567">
    <property type="term" value="P:DNA replication, Okazaki fragment processing"/>
    <property type="evidence" value="ECO:0007669"/>
    <property type="project" value="UniProtKB-UniRule"/>
</dbReference>
<dbReference type="CDD" id="cd09898">
    <property type="entry name" value="H3TH_53EXO"/>
    <property type="match status" value="1"/>
</dbReference>
<dbReference type="CDD" id="cd09859">
    <property type="entry name" value="PIN_53EXO"/>
    <property type="match status" value="1"/>
</dbReference>
<dbReference type="FunFam" id="1.10.150.20:FF:000003">
    <property type="entry name" value="DNA polymerase I"/>
    <property type="match status" value="1"/>
</dbReference>
<dbReference type="FunFam" id="3.40.50.1010:FF:000011">
    <property type="entry name" value="Flap endonuclease Xni"/>
    <property type="match status" value="1"/>
</dbReference>
<dbReference type="Gene3D" id="1.10.150.20">
    <property type="entry name" value="5' to 3' exonuclease, C-terminal subdomain"/>
    <property type="match status" value="1"/>
</dbReference>
<dbReference type="Gene3D" id="3.40.50.1010">
    <property type="entry name" value="5'-nuclease"/>
    <property type="match status" value="1"/>
</dbReference>
<dbReference type="HAMAP" id="MF_01192">
    <property type="entry name" value="Xni"/>
    <property type="match status" value="1"/>
</dbReference>
<dbReference type="InterPro" id="IPR020046">
    <property type="entry name" value="5-3_exonucl_a-hlix_arch_N"/>
</dbReference>
<dbReference type="InterPro" id="IPR002421">
    <property type="entry name" value="5-3_exonuclease"/>
</dbReference>
<dbReference type="InterPro" id="IPR036279">
    <property type="entry name" value="5-3_exonuclease_C_sf"/>
</dbReference>
<dbReference type="InterPro" id="IPR020045">
    <property type="entry name" value="DNA_polI_H3TH"/>
</dbReference>
<dbReference type="InterPro" id="IPR038969">
    <property type="entry name" value="FEN"/>
</dbReference>
<dbReference type="InterPro" id="IPR008918">
    <property type="entry name" value="HhH2"/>
</dbReference>
<dbReference type="InterPro" id="IPR029060">
    <property type="entry name" value="PIN-like_dom_sf"/>
</dbReference>
<dbReference type="InterPro" id="IPR022895">
    <property type="entry name" value="Xni"/>
</dbReference>
<dbReference type="NCBIfam" id="NF007017">
    <property type="entry name" value="PRK09482.1"/>
    <property type="match status" value="1"/>
</dbReference>
<dbReference type="PANTHER" id="PTHR42646:SF2">
    <property type="entry name" value="5'-3' EXONUCLEASE FAMILY PROTEIN"/>
    <property type="match status" value="1"/>
</dbReference>
<dbReference type="PANTHER" id="PTHR42646">
    <property type="entry name" value="FLAP ENDONUCLEASE XNI"/>
    <property type="match status" value="1"/>
</dbReference>
<dbReference type="Pfam" id="PF01367">
    <property type="entry name" value="5_3_exonuc"/>
    <property type="match status" value="1"/>
</dbReference>
<dbReference type="Pfam" id="PF02739">
    <property type="entry name" value="5_3_exonuc_N"/>
    <property type="match status" value="1"/>
</dbReference>
<dbReference type="SMART" id="SM00475">
    <property type="entry name" value="53EXOc"/>
    <property type="match status" value="1"/>
</dbReference>
<dbReference type="SMART" id="SM00279">
    <property type="entry name" value="HhH2"/>
    <property type="match status" value="1"/>
</dbReference>
<dbReference type="SUPFAM" id="SSF47807">
    <property type="entry name" value="5' to 3' exonuclease, C-terminal subdomain"/>
    <property type="match status" value="1"/>
</dbReference>
<dbReference type="SUPFAM" id="SSF88723">
    <property type="entry name" value="PIN domain-like"/>
    <property type="match status" value="1"/>
</dbReference>